<reference key="1">
    <citation type="journal article" date="2010" name="PLoS ONE">
        <title>The complete multipartite genome sequence of Cupriavidus necator JMP134, a versatile pollutant degrader.</title>
        <authorList>
            <person name="Lykidis A."/>
            <person name="Perez-Pantoja D."/>
            <person name="Ledger T."/>
            <person name="Mavromatis K."/>
            <person name="Anderson I.J."/>
            <person name="Ivanova N.N."/>
            <person name="Hooper S.D."/>
            <person name="Lapidus A."/>
            <person name="Lucas S."/>
            <person name="Gonzalez B."/>
            <person name="Kyrpides N.C."/>
        </authorList>
    </citation>
    <scope>NUCLEOTIDE SEQUENCE [LARGE SCALE GENOMIC DNA]</scope>
    <source>
        <strain>JMP134 / LMG 1197</strain>
    </source>
</reference>
<accession>Q46WF5</accession>
<organism>
    <name type="scientific">Cupriavidus pinatubonensis (strain JMP 134 / LMG 1197)</name>
    <name type="common">Cupriavidus necator (strain JMP 134)</name>
    <dbReference type="NCBI Taxonomy" id="264198"/>
    <lineage>
        <taxon>Bacteria</taxon>
        <taxon>Pseudomonadati</taxon>
        <taxon>Pseudomonadota</taxon>
        <taxon>Betaproteobacteria</taxon>
        <taxon>Burkholderiales</taxon>
        <taxon>Burkholderiaceae</taxon>
        <taxon>Cupriavidus</taxon>
    </lineage>
</organism>
<comment type="function">
    <text evidence="1">One of two assembly initiator proteins, it binds directly to the 5'-end of the 23S rRNA, where it nucleates assembly of the 50S subunit.</text>
</comment>
<comment type="function">
    <text evidence="1">One of the proteins that surrounds the polypeptide exit tunnel on the outside of the subunit.</text>
</comment>
<comment type="subunit">
    <text evidence="1">Part of the 50S ribosomal subunit.</text>
</comment>
<comment type="similarity">
    <text evidence="1">Belongs to the universal ribosomal protein uL24 family.</text>
</comment>
<name>RL24_CUPPJ</name>
<dbReference type="EMBL" id="CP000090">
    <property type="protein sequence ID" value="AAZ62528.1"/>
    <property type="molecule type" value="Genomic_DNA"/>
</dbReference>
<dbReference type="SMR" id="Q46WF5"/>
<dbReference type="STRING" id="264198.Reut_A3168"/>
<dbReference type="KEGG" id="reu:Reut_A3168"/>
<dbReference type="eggNOG" id="COG0198">
    <property type="taxonomic scope" value="Bacteria"/>
</dbReference>
<dbReference type="HOGENOM" id="CLU_093315_2_2_4"/>
<dbReference type="OrthoDB" id="9807419at2"/>
<dbReference type="GO" id="GO:1990904">
    <property type="term" value="C:ribonucleoprotein complex"/>
    <property type="evidence" value="ECO:0007669"/>
    <property type="project" value="UniProtKB-KW"/>
</dbReference>
<dbReference type="GO" id="GO:0005840">
    <property type="term" value="C:ribosome"/>
    <property type="evidence" value="ECO:0007669"/>
    <property type="project" value="UniProtKB-KW"/>
</dbReference>
<dbReference type="GO" id="GO:0019843">
    <property type="term" value="F:rRNA binding"/>
    <property type="evidence" value="ECO:0007669"/>
    <property type="project" value="UniProtKB-UniRule"/>
</dbReference>
<dbReference type="GO" id="GO:0003735">
    <property type="term" value="F:structural constituent of ribosome"/>
    <property type="evidence" value="ECO:0007669"/>
    <property type="project" value="InterPro"/>
</dbReference>
<dbReference type="GO" id="GO:0006412">
    <property type="term" value="P:translation"/>
    <property type="evidence" value="ECO:0007669"/>
    <property type="project" value="UniProtKB-UniRule"/>
</dbReference>
<dbReference type="CDD" id="cd06089">
    <property type="entry name" value="KOW_RPL26"/>
    <property type="match status" value="1"/>
</dbReference>
<dbReference type="FunFam" id="2.30.30.30:FF:000004">
    <property type="entry name" value="50S ribosomal protein L24"/>
    <property type="match status" value="1"/>
</dbReference>
<dbReference type="Gene3D" id="2.30.30.30">
    <property type="match status" value="1"/>
</dbReference>
<dbReference type="HAMAP" id="MF_01326_B">
    <property type="entry name" value="Ribosomal_uL24_B"/>
    <property type="match status" value="1"/>
</dbReference>
<dbReference type="InterPro" id="IPR005824">
    <property type="entry name" value="KOW"/>
</dbReference>
<dbReference type="InterPro" id="IPR014722">
    <property type="entry name" value="Rib_uL2_dom2"/>
</dbReference>
<dbReference type="InterPro" id="IPR003256">
    <property type="entry name" value="Ribosomal_uL24"/>
</dbReference>
<dbReference type="InterPro" id="IPR005825">
    <property type="entry name" value="Ribosomal_uL24_CS"/>
</dbReference>
<dbReference type="InterPro" id="IPR041988">
    <property type="entry name" value="Ribosomal_uL24_KOW"/>
</dbReference>
<dbReference type="InterPro" id="IPR008991">
    <property type="entry name" value="Translation_prot_SH3-like_sf"/>
</dbReference>
<dbReference type="NCBIfam" id="TIGR01079">
    <property type="entry name" value="rplX_bact"/>
    <property type="match status" value="1"/>
</dbReference>
<dbReference type="PANTHER" id="PTHR12903">
    <property type="entry name" value="MITOCHONDRIAL RIBOSOMAL PROTEIN L24"/>
    <property type="match status" value="1"/>
</dbReference>
<dbReference type="Pfam" id="PF00467">
    <property type="entry name" value="KOW"/>
    <property type="match status" value="1"/>
</dbReference>
<dbReference type="Pfam" id="PF17136">
    <property type="entry name" value="ribosomal_L24"/>
    <property type="match status" value="1"/>
</dbReference>
<dbReference type="SMART" id="SM00739">
    <property type="entry name" value="KOW"/>
    <property type="match status" value="1"/>
</dbReference>
<dbReference type="SUPFAM" id="SSF50104">
    <property type="entry name" value="Translation proteins SH3-like domain"/>
    <property type="match status" value="1"/>
</dbReference>
<dbReference type="PROSITE" id="PS01108">
    <property type="entry name" value="RIBOSOMAL_L24"/>
    <property type="match status" value="1"/>
</dbReference>
<evidence type="ECO:0000255" key="1">
    <source>
        <dbReference type="HAMAP-Rule" id="MF_01326"/>
    </source>
</evidence>
<evidence type="ECO:0000305" key="2"/>
<proteinExistence type="inferred from homology"/>
<sequence>MNKIRKGDEVIVLTGKDKGKRGTVQAVLGDKVAVEGVNVAKKHARPNPMLGTTGGVVDKVMPLHISNVALVDANGKPSRVGIKVEDGKRVRVLKTTGAVVAA</sequence>
<protein>
    <recommendedName>
        <fullName evidence="1">Large ribosomal subunit protein uL24</fullName>
    </recommendedName>
    <alternativeName>
        <fullName evidence="2">50S ribosomal protein L24</fullName>
    </alternativeName>
</protein>
<keyword id="KW-0687">Ribonucleoprotein</keyword>
<keyword id="KW-0689">Ribosomal protein</keyword>
<keyword id="KW-0694">RNA-binding</keyword>
<keyword id="KW-0699">rRNA-binding</keyword>
<feature type="chain" id="PRO_0000241647" description="Large ribosomal subunit protein uL24">
    <location>
        <begin position="1"/>
        <end position="102"/>
    </location>
</feature>
<gene>
    <name evidence="1" type="primary">rplX</name>
    <name type="ordered locus">Reut_A3168</name>
</gene>